<sequence>MEWSLTQNKLLAFHRLMRTDKPIGALLLLWPTLWALWVATPGVPQLWILAVFVAGVWLMRAAGCVVNDYADRKFDGHVKRTANRPLPSGAVTEKEARALFVVLVLISFLLVLTLNTMTILLSIAALALAWVYPFMKRYTHLPQVVLGAAFGWSIPMAFAAVSESVPLSCWLMFLANILWAVAYDTQYAMVDRDDDVKIGIKSTAILFGQYDKLIIGILQIGVLALMAIIGELNGLGWGYYWSILVAGALFVYQQKLIANREREACFKAFMNNNYVGLVLFLGLAMSYWHF</sequence>
<gene>
    <name evidence="1" type="primary">ubiA</name>
    <name type="ordered locus">E2348C_4355</name>
</gene>
<organism>
    <name type="scientific">Escherichia coli O127:H6 (strain E2348/69 / EPEC)</name>
    <dbReference type="NCBI Taxonomy" id="574521"/>
    <lineage>
        <taxon>Bacteria</taxon>
        <taxon>Pseudomonadati</taxon>
        <taxon>Pseudomonadota</taxon>
        <taxon>Gammaproteobacteria</taxon>
        <taxon>Enterobacterales</taxon>
        <taxon>Enterobacteriaceae</taxon>
        <taxon>Escherichia</taxon>
    </lineage>
</organism>
<reference key="1">
    <citation type="journal article" date="2009" name="J. Bacteriol.">
        <title>Complete genome sequence and comparative genome analysis of enteropathogenic Escherichia coli O127:H6 strain E2348/69.</title>
        <authorList>
            <person name="Iguchi A."/>
            <person name="Thomson N.R."/>
            <person name="Ogura Y."/>
            <person name="Saunders D."/>
            <person name="Ooka T."/>
            <person name="Henderson I.R."/>
            <person name="Harris D."/>
            <person name="Asadulghani M."/>
            <person name="Kurokawa K."/>
            <person name="Dean P."/>
            <person name="Kenny B."/>
            <person name="Quail M.A."/>
            <person name="Thurston S."/>
            <person name="Dougan G."/>
            <person name="Hayashi T."/>
            <person name="Parkhill J."/>
            <person name="Frankel G."/>
        </authorList>
    </citation>
    <scope>NUCLEOTIDE SEQUENCE [LARGE SCALE GENOMIC DNA]</scope>
    <source>
        <strain>E2348/69 / EPEC</strain>
    </source>
</reference>
<comment type="function">
    <text evidence="1">Catalyzes the prenylation of para-hydroxybenzoate (PHB) with an all-trans polyprenyl group. Mediates the second step in the final reaction sequence of ubiquinone-8 (UQ-8) biosynthesis, which is the condensation of the polyisoprenoid side chain with PHB, generating the first membrane-bound Q intermediate 3-octaprenyl-4-hydroxybenzoate.</text>
</comment>
<comment type="catalytic activity">
    <reaction evidence="1">
        <text>all-trans-octaprenyl diphosphate + 4-hydroxybenzoate = 4-hydroxy-3-(all-trans-octaprenyl)benzoate + diphosphate</text>
        <dbReference type="Rhea" id="RHEA:27782"/>
        <dbReference type="ChEBI" id="CHEBI:1617"/>
        <dbReference type="ChEBI" id="CHEBI:17879"/>
        <dbReference type="ChEBI" id="CHEBI:33019"/>
        <dbReference type="ChEBI" id="CHEBI:57711"/>
        <dbReference type="EC" id="2.5.1.39"/>
    </reaction>
</comment>
<comment type="cofactor">
    <cofactor evidence="1">
        <name>Mg(2+)</name>
        <dbReference type="ChEBI" id="CHEBI:18420"/>
    </cofactor>
</comment>
<comment type="pathway">
    <text evidence="1">Cofactor biosynthesis; ubiquinone biosynthesis.</text>
</comment>
<comment type="subcellular location">
    <subcellularLocation>
        <location evidence="1">Cell inner membrane</location>
        <topology evidence="1">Multi-pass membrane protein</topology>
    </subcellularLocation>
</comment>
<comment type="similarity">
    <text evidence="1">Belongs to the UbiA prenyltransferase family.</text>
</comment>
<name>UBIA_ECO27</name>
<accession>B7UPK1</accession>
<dbReference type="EC" id="2.5.1.39" evidence="1"/>
<dbReference type="EMBL" id="FM180568">
    <property type="protein sequence ID" value="CAS11903.1"/>
    <property type="molecule type" value="Genomic_DNA"/>
</dbReference>
<dbReference type="RefSeq" id="WP_000455227.1">
    <property type="nucleotide sequence ID" value="NC_011601.1"/>
</dbReference>
<dbReference type="SMR" id="B7UPK1"/>
<dbReference type="GeneID" id="93777791"/>
<dbReference type="KEGG" id="ecg:E2348C_4355"/>
<dbReference type="HOGENOM" id="CLU_034879_1_0_6"/>
<dbReference type="UniPathway" id="UPA00232"/>
<dbReference type="Proteomes" id="UP000008205">
    <property type="component" value="Chromosome"/>
</dbReference>
<dbReference type="GO" id="GO:0005886">
    <property type="term" value="C:plasma membrane"/>
    <property type="evidence" value="ECO:0007669"/>
    <property type="project" value="UniProtKB-SubCell"/>
</dbReference>
<dbReference type="GO" id="GO:0008412">
    <property type="term" value="F:4-hydroxybenzoate polyprenyltransferase activity"/>
    <property type="evidence" value="ECO:0007669"/>
    <property type="project" value="UniProtKB-UniRule"/>
</dbReference>
<dbReference type="GO" id="GO:0006744">
    <property type="term" value="P:ubiquinone biosynthetic process"/>
    <property type="evidence" value="ECO:0007669"/>
    <property type="project" value="UniProtKB-UniRule"/>
</dbReference>
<dbReference type="CDD" id="cd13959">
    <property type="entry name" value="PT_UbiA_COQ2"/>
    <property type="match status" value="1"/>
</dbReference>
<dbReference type="FunFam" id="1.10.357.140:FF:000002">
    <property type="entry name" value="4-hydroxybenzoate octaprenyltransferase"/>
    <property type="match status" value="1"/>
</dbReference>
<dbReference type="FunFam" id="1.20.120.1780:FF:000001">
    <property type="entry name" value="4-hydroxybenzoate octaprenyltransferase"/>
    <property type="match status" value="1"/>
</dbReference>
<dbReference type="Gene3D" id="1.10.357.140">
    <property type="entry name" value="UbiA prenyltransferase"/>
    <property type="match status" value="1"/>
</dbReference>
<dbReference type="Gene3D" id="1.20.120.1780">
    <property type="entry name" value="UbiA prenyltransferase"/>
    <property type="match status" value="1"/>
</dbReference>
<dbReference type="HAMAP" id="MF_01635">
    <property type="entry name" value="UbiA"/>
    <property type="match status" value="1"/>
</dbReference>
<dbReference type="InterPro" id="IPR006370">
    <property type="entry name" value="HB_polyprenyltransferase-like"/>
</dbReference>
<dbReference type="InterPro" id="IPR039653">
    <property type="entry name" value="Prenyltransferase"/>
</dbReference>
<dbReference type="InterPro" id="IPR000537">
    <property type="entry name" value="UbiA_prenyltransferase"/>
</dbReference>
<dbReference type="InterPro" id="IPR030470">
    <property type="entry name" value="UbiA_prenylTrfase_CS"/>
</dbReference>
<dbReference type="InterPro" id="IPR044878">
    <property type="entry name" value="UbiA_sf"/>
</dbReference>
<dbReference type="NCBIfam" id="TIGR01474">
    <property type="entry name" value="ubiA_proteo"/>
    <property type="match status" value="1"/>
</dbReference>
<dbReference type="PANTHER" id="PTHR11048:SF28">
    <property type="entry name" value="4-HYDROXYBENZOATE POLYPRENYLTRANSFERASE, MITOCHONDRIAL"/>
    <property type="match status" value="1"/>
</dbReference>
<dbReference type="PANTHER" id="PTHR11048">
    <property type="entry name" value="PRENYLTRANSFERASES"/>
    <property type="match status" value="1"/>
</dbReference>
<dbReference type="Pfam" id="PF01040">
    <property type="entry name" value="UbiA"/>
    <property type="match status" value="1"/>
</dbReference>
<dbReference type="PROSITE" id="PS00943">
    <property type="entry name" value="UBIA"/>
    <property type="match status" value="1"/>
</dbReference>
<protein>
    <recommendedName>
        <fullName evidence="1">4-hydroxybenzoate octaprenyltransferase</fullName>
        <ecNumber evidence="1">2.5.1.39</ecNumber>
    </recommendedName>
    <alternativeName>
        <fullName evidence="1">4-HB polyprenyltransferase</fullName>
    </alternativeName>
</protein>
<evidence type="ECO:0000255" key="1">
    <source>
        <dbReference type="HAMAP-Rule" id="MF_01635"/>
    </source>
</evidence>
<proteinExistence type="inferred from homology"/>
<feature type="chain" id="PRO_1000186663" description="4-hydroxybenzoate octaprenyltransferase">
    <location>
        <begin position="1"/>
        <end position="290"/>
    </location>
</feature>
<feature type="transmembrane region" description="Helical" evidence="1">
    <location>
        <begin position="23"/>
        <end position="43"/>
    </location>
</feature>
<feature type="transmembrane region" description="Helical" evidence="1">
    <location>
        <begin position="46"/>
        <end position="66"/>
    </location>
</feature>
<feature type="transmembrane region" description="Helical" evidence="1">
    <location>
        <begin position="99"/>
        <end position="119"/>
    </location>
</feature>
<feature type="transmembrane region" description="Helical" evidence="1">
    <location>
        <begin position="141"/>
        <end position="161"/>
    </location>
</feature>
<feature type="transmembrane region" description="Helical" evidence="1">
    <location>
        <begin position="163"/>
        <end position="183"/>
    </location>
</feature>
<feature type="transmembrane region" description="Helical" evidence="1">
    <location>
        <begin position="213"/>
        <end position="233"/>
    </location>
</feature>
<feature type="transmembrane region" description="Helical" evidence="1">
    <location>
        <begin position="234"/>
        <end position="254"/>
    </location>
</feature>
<feature type="transmembrane region" description="Helical" evidence="1">
    <location>
        <begin position="268"/>
        <end position="288"/>
    </location>
</feature>
<keyword id="KW-0997">Cell inner membrane</keyword>
<keyword id="KW-1003">Cell membrane</keyword>
<keyword id="KW-0460">Magnesium</keyword>
<keyword id="KW-0472">Membrane</keyword>
<keyword id="KW-1185">Reference proteome</keyword>
<keyword id="KW-0808">Transferase</keyword>
<keyword id="KW-0812">Transmembrane</keyword>
<keyword id="KW-1133">Transmembrane helix</keyword>
<keyword id="KW-0831">Ubiquinone biosynthesis</keyword>